<feature type="chain" id="PRO_0000179037" description="GTPase Der">
    <location>
        <begin position="1"/>
        <end position="447"/>
    </location>
</feature>
<feature type="domain" description="EngA-type G 1">
    <location>
        <begin position="4"/>
        <end position="165"/>
    </location>
</feature>
<feature type="domain" description="EngA-type G 2">
    <location>
        <begin position="180"/>
        <end position="357"/>
    </location>
</feature>
<feature type="domain" description="KH-like" evidence="1">
    <location>
        <begin position="358"/>
        <end position="443"/>
    </location>
</feature>
<feature type="binding site" evidence="1">
    <location>
        <begin position="10"/>
        <end position="17"/>
    </location>
    <ligand>
        <name>GTP</name>
        <dbReference type="ChEBI" id="CHEBI:37565"/>
        <label>1</label>
    </ligand>
</feature>
<feature type="binding site" evidence="1">
    <location>
        <begin position="57"/>
        <end position="61"/>
    </location>
    <ligand>
        <name>GTP</name>
        <dbReference type="ChEBI" id="CHEBI:37565"/>
        <label>1</label>
    </ligand>
</feature>
<feature type="binding site" evidence="1">
    <location>
        <begin position="119"/>
        <end position="122"/>
    </location>
    <ligand>
        <name>GTP</name>
        <dbReference type="ChEBI" id="CHEBI:37565"/>
        <label>1</label>
    </ligand>
</feature>
<feature type="binding site" evidence="1">
    <location>
        <begin position="186"/>
        <end position="193"/>
    </location>
    <ligand>
        <name>GTP</name>
        <dbReference type="ChEBI" id="CHEBI:37565"/>
        <label>2</label>
    </ligand>
</feature>
<feature type="binding site" evidence="1">
    <location>
        <begin position="233"/>
        <end position="237"/>
    </location>
    <ligand>
        <name>GTP</name>
        <dbReference type="ChEBI" id="CHEBI:37565"/>
        <label>2</label>
    </ligand>
</feature>
<feature type="binding site" evidence="1">
    <location>
        <begin position="298"/>
        <end position="301"/>
    </location>
    <ligand>
        <name>GTP</name>
        <dbReference type="ChEBI" id="CHEBI:37565"/>
        <label>2</label>
    </ligand>
</feature>
<name>DER_RICCN</name>
<reference key="1">
    <citation type="journal article" date="2001" name="Science">
        <title>Mechanisms of evolution in Rickettsia conorii and R. prowazekii.</title>
        <authorList>
            <person name="Ogata H."/>
            <person name="Audic S."/>
            <person name="Renesto-Audiffren P."/>
            <person name="Fournier P.-E."/>
            <person name="Barbe V."/>
            <person name="Samson D."/>
            <person name="Roux V."/>
            <person name="Cossart P."/>
            <person name="Weissenbach J."/>
            <person name="Claverie J.-M."/>
            <person name="Raoult D."/>
        </authorList>
    </citation>
    <scope>NUCLEOTIDE SEQUENCE [LARGE SCALE GENOMIC DNA]</scope>
    <source>
        <strain>ATCC VR-613 / Malish 7</strain>
    </source>
</reference>
<protein>
    <recommendedName>
        <fullName evidence="1">GTPase Der</fullName>
    </recommendedName>
    <alternativeName>
        <fullName evidence="1">GTP-binding protein EngA</fullName>
    </alternativeName>
</protein>
<proteinExistence type="inferred from homology"/>
<accession>Q92GU2</accession>
<sequence length="447" mass="50744">MTKQIITLVGRPNVGKSTLFNRLSIRKKAIVHDLPGVTRDRKYTDGKIGSFEFLLIDTPGLDENPNSMGERLIEQTTKAILEADLICFMVDGRSGILPDDKLLSSFVRKYNKPAILVVNKCEKAFDFDKEYYKLGFDSMIAISAEHGTGLIDLYDEIIAKLPEEESIKTNIADPIKGDCLQIVVSGRPNAGKSTFINALINDERLLTGPEAGITRESIEIDWQYKNNHIKLIDTAGLRKKSTITESLEKLSASDTINSIKFANTVILMIDALAPLKQQDLNIASHVVHEGRSIVIVVNKWDLVKESEKEAFQEEFYYQINTHLPQVKGIPVLFISAINKQNIEQVLDACLKIYKIWNKKITTSKLNEWLNFTTEAHLLPLQKGGRRVRVKYMTQTKTRPPTFKLFSNNPEKITDSYTRYLVNNMREAFDMPGVPIRFIYVKTKNPYV</sequence>
<organism>
    <name type="scientific">Rickettsia conorii (strain ATCC VR-613 / Malish 7)</name>
    <dbReference type="NCBI Taxonomy" id="272944"/>
    <lineage>
        <taxon>Bacteria</taxon>
        <taxon>Pseudomonadati</taxon>
        <taxon>Pseudomonadota</taxon>
        <taxon>Alphaproteobacteria</taxon>
        <taxon>Rickettsiales</taxon>
        <taxon>Rickettsiaceae</taxon>
        <taxon>Rickettsieae</taxon>
        <taxon>Rickettsia</taxon>
        <taxon>spotted fever group</taxon>
    </lineage>
</organism>
<keyword id="KW-0342">GTP-binding</keyword>
<keyword id="KW-0547">Nucleotide-binding</keyword>
<keyword id="KW-0677">Repeat</keyword>
<keyword id="KW-0690">Ribosome biogenesis</keyword>
<dbReference type="EMBL" id="AE006914">
    <property type="protein sequence ID" value="AAL03568.1"/>
    <property type="molecule type" value="Genomic_DNA"/>
</dbReference>
<dbReference type="PIR" id="F97828">
    <property type="entry name" value="F97828"/>
</dbReference>
<dbReference type="RefSeq" id="WP_010977608.1">
    <property type="nucleotide sequence ID" value="NC_003103.1"/>
</dbReference>
<dbReference type="SMR" id="Q92GU2"/>
<dbReference type="GeneID" id="928177"/>
<dbReference type="KEGG" id="rco:RC1030"/>
<dbReference type="PATRIC" id="fig|272944.4.peg.1173"/>
<dbReference type="HOGENOM" id="CLU_016077_5_0_5"/>
<dbReference type="Proteomes" id="UP000000816">
    <property type="component" value="Chromosome"/>
</dbReference>
<dbReference type="GO" id="GO:0005525">
    <property type="term" value="F:GTP binding"/>
    <property type="evidence" value="ECO:0007669"/>
    <property type="project" value="UniProtKB-UniRule"/>
</dbReference>
<dbReference type="GO" id="GO:0042254">
    <property type="term" value="P:ribosome biogenesis"/>
    <property type="evidence" value="ECO:0007669"/>
    <property type="project" value="UniProtKB-KW"/>
</dbReference>
<dbReference type="CDD" id="cd01894">
    <property type="entry name" value="EngA1"/>
    <property type="match status" value="1"/>
</dbReference>
<dbReference type="CDD" id="cd01895">
    <property type="entry name" value="EngA2"/>
    <property type="match status" value="1"/>
</dbReference>
<dbReference type="FunFam" id="3.30.300.20:FF:000004">
    <property type="entry name" value="GTPase Der"/>
    <property type="match status" value="1"/>
</dbReference>
<dbReference type="Gene3D" id="3.30.300.20">
    <property type="match status" value="1"/>
</dbReference>
<dbReference type="Gene3D" id="3.40.50.300">
    <property type="entry name" value="P-loop containing nucleotide triphosphate hydrolases"/>
    <property type="match status" value="2"/>
</dbReference>
<dbReference type="HAMAP" id="MF_00195">
    <property type="entry name" value="GTPase_Der"/>
    <property type="match status" value="1"/>
</dbReference>
<dbReference type="InterPro" id="IPR031166">
    <property type="entry name" value="G_ENGA"/>
</dbReference>
<dbReference type="InterPro" id="IPR006073">
    <property type="entry name" value="GTP-bd"/>
</dbReference>
<dbReference type="InterPro" id="IPR016484">
    <property type="entry name" value="GTPase_Der"/>
</dbReference>
<dbReference type="InterPro" id="IPR032859">
    <property type="entry name" value="KH_dom-like"/>
</dbReference>
<dbReference type="InterPro" id="IPR015946">
    <property type="entry name" value="KH_dom-like_a/b"/>
</dbReference>
<dbReference type="InterPro" id="IPR027417">
    <property type="entry name" value="P-loop_NTPase"/>
</dbReference>
<dbReference type="InterPro" id="IPR005225">
    <property type="entry name" value="Small_GTP-bd"/>
</dbReference>
<dbReference type="NCBIfam" id="TIGR03594">
    <property type="entry name" value="GTPase_EngA"/>
    <property type="match status" value="1"/>
</dbReference>
<dbReference type="NCBIfam" id="TIGR00231">
    <property type="entry name" value="small_GTP"/>
    <property type="match status" value="2"/>
</dbReference>
<dbReference type="PANTHER" id="PTHR43834">
    <property type="entry name" value="GTPASE DER"/>
    <property type="match status" value="1"/>
</dbReference>
<dbReference type="PANTHER" id="PTHR43834:SF6">
    <property type="entry name" value="GTPASE DER"/>
    <property type="match status" value="1"/>
</dbReference>
<dbReference type="Pfam" id="PF14714">
    <property type="entry name" value="KH_dom-like"/>
    <property type="match status" value="1"/>
</dbReference>
<dbReference type="Pfam" id="PF01926">
    <property type="entry name" value="MMR_HSR1"/>
    <property type="match status" value="2"/>
</dbReference>
<dbReference type="PIRSF" id="PIRSF006485">
    <property type="entry name" value="GTP-binding_EngA"/>
    <property type="match status" value="1"/>
</dbReference>
<dbReference type="PRINTS" id="PR00326">
    <property type="entry name" value="GTP1OBG"/>
</dbReference>
<dbReference type="SUPFAM" id="SSF52540">
    <property type="entry name" value="P-loop containing nucleoside triphosphate hydrolases"/>
    <property type="match status" value="2"/>
</dbReference>
<dbReference type="PROSITE" id="PS51712">
    <property type="entry name" value="G_ENGA"/>
    <property type="match status" value="2"/>
</dbReference>
<evidence type="ECO:0000255" key="1">
    <source>
        <dbReference type="HAMAP-Rule" id="MF_00195"/>
    </source>
</evidence>
<comment type="function">
    <text evidence="1">GTPase that plays an essential role in the late steps of ribosome biogenesis.</text>
</comment>
<comment type="subunit">
    <text evidence="1">Associates with the 50S ribosomal subunit.</text>
</comment>
<comment type="similarity">
    <text evidence="1">Belongs to the TRAFAC class TrmE-Era-EngA-EngB-Septin-like GTPase superfamily. EngA (Der) GTPase family.</text>
</comment>
<gene>
    <name evidence="1" type="primary">der</name>
    <name type="synonym">engA</name>
    <name type="ordered locus">RC1030</name>
</gene>